<protein>
    <recommendedName>
        <fullName>Syncytin-1</fullName>
    </recommendedName>
    <alternativeName>
        <fullName>ERV-W1 provirus ancestral Env polyprotein</fullName>
    </alternativeName>
    <alternativeName>
        <fullName>ERVWE1 envelope protein</fullName>
    </alternativeName>
    <alternativeName>
        <fullName>Endogenous retrovirus group W member 1</fullName>
    </alternativeName>
    <alternativeName>
        <fullName>Envelope polyprotein</fullName>
    </alternativeName>
    <alternativeName>
        <fullName>Syncytin</fullName>
    </alternativeName>
    <component>
        <recommendedName>
            <fullName>Surface protein</fullName>
            <shortName>SU</shortName>
        </recommendedName>
    </component>
    <component>
        <recommendedName>
            <fullName>Transmembrane protein</fullName>
            <shortName>TM</shortName>
        </recommendedName>
    </component>
</protein>
<comment type="function">
    <text evidence="1">This endogenous retroviral envelope protein has retained its original fusogenic properties and participates in trophoblast fusion and the formation of a syncytium during placenta morphogenesis. May recognize and induce fusion through binding of SLC1A4 and SLC1A5 (By similarity).</text>
</comment>
<comment type="function">
    <text evidence="1">Endogenous envelope proteins may have kept, lost or modified their original function during evolution. Retroviral envelope proteins mediate receptor recognition and membrane fusion during early infection. The surface protein (SU) mediates receptor recognition, while the transmembrane protein (TM) acts as a class I viral fusion protein. The protein may have at least 3 conformational states: pre-fusion native state, pre-hairpin intermediate state, and post-fusion hairpin state. During viral and target cell membrane fusion, the coiled coil regions (heptad repeats) assume a trimer-of-hairpins structure, positioning the fusion peptide in close proximity to the C-terminal region of the ectodomain. The formation of this structure appears to drive apposition and subsequent fusion of membranes (By similarity).</text>
</comment>
<comment type="subunit">
    <text evidence="1">The mature envelope protein (Env) consists of a trimer of SU-TM heterodimers attached probably by a labile interchain disulfide bond. Interacts with the C-type lectin CD209/DC-SIGN (By similarity).</text>
</comment>
<comment type="subcellular location">
    <molecule>Surface protein</molecule>
    <subcellularLocation>
        <location evidence="7">Cell membrane</location>
        <topology evidence="7">Peripheral membrane protein</topology>
    </subcellularLocation>
    <text evidence="4">The surface protein is not anchored to the membrane, but localizes to the extracellular surface through its binding to TM.</text>
</comment>
<comment type="subcellular location">
    <molecule>Transmembrane protein</molecule>
    <subcellularLocation>
        <location evidence="7">Cell membrane</location>
        <topology evidence="5">Single-pass type I membrane protein</topology>
    </subcellularLocation>
</comment>
<comment type="subcellular location">
    <molecule>Syncytin-1</molecule>
    <subcellularLocation>
        <location evidence="1">Virion</location>
    </subcellularLocation>
</comment>
<comment type="domain">
    <text evidence="1">The cytoplasmic region is essential for the fusiogenic function.</text>
</comment>
<comment type="domain">
    <text evidence="1">The 17 amino acids long immunosuppressive region is present in many retroviral envelope proteins. Synthetic peptides derived from this relatively conserved sequence inhibit immune function in vitro and in vivo (By similarity).</text>
</comment>
<comment type="PTM">
    <text evidence="1">Specific enzymatic cleavages in vivo yield mature proteins. Envelope glycoproteins are synthesized as an inactive precursor that is heavily N-glycosylated and processed likely by furin in the Golgi to yield the mature SU and TM proteins. The cleavage site between SU and TM requires the minimal sequence [KR]-X-[KR]-R (By similarity).</text>
</comment>
<comment type="PTM">
    <text evidence="1">The CXXC motif is highly conserved across a broad range of retroviral envelope proteins. It is thought to participate in the formation of a labile disulfide bond possibly with the CX6CC motif present in the transmembrane protein (By similarity).</text>
</comment>
<comment type="miscellaneous">
    <text>Ortholog of the human HERV-W_7q21.2 envelope protein.</text>
</comment>
<comment type="miscellaneous">
    <text>The genome contains a high percentage of proviral-like elements, also called endogenous retroviruses (ERVs) that are the genomic traces of ancient infections of the germline by exogenous retroviruses. Although most of these elements are defective, some have conserved a functional envelope (env) gene, most probably diverted by the host for its benefit.</text>
</comment>
<comment type="similarity">
    <text evidence="7">Belongs to the gamma type-C retroviral envelope protein family. HERV class-I W env subfamily.</text>
</comment>
<reference key="1">
    <citation type="journal article" date="2004" name="Proc. Natl. Acad. Sci. U.S.A.">
        <title>The endogenous retroviral locus ERVWE1 is a bona fide gene involved in hominoid placental physiology.</title>
        <authorList>
            <person name="Mallet F."/>
            <person name="Bouton O."/>
            <person name="Prudhomme S."/>
            <person name="Cheynet V."/>
            <person name="Oriol G."/>
            <person name="Bonnaud B."/>
            <person name="Lucotte G."/>
            <person name="Duret L."/>
            <person name="Mandrand B."/>
        </authorList>
    </citation>
    <scope>NUCLEOTIDE SEQUENCE [GENOMIC DNA]</scope>
</reference>
<organism>
    <name type="scientific">Hylobates pileatus</name>
    <name type="common">Pileated gibbon</name>
    <dbReference type="NCBI Taxonomy" id="9589"/>
    <lineage>
        <taxon>Eukaryota</taxon>
        <taxon>Metazoa</taxon>
        <taxon>Chordata</taxon>
        <taxon>Craniata</taxon>
        <taxon>Vertebrata</taxon>
        <taxon>Euteleostomi</taxon>
        <taxon>Mammalia</taxon>
        <taxon>Eutheria</taxon>
        <taxon>Euarchontoglires</taxon>
        <taxon>Primates</taxon>
        <taxon>Haplorrhini</taxon>
        <taxon>Catarrhini</taxon>
        <taxon>Hylobatidae</taxon>
        <taxon>Hylobates</taxon>
    </lineage>
</organism>
<gene>
    <name type="primary">ERVW-1</name>
    <name type="synonym">ERVWE1</name>
</gene>
<feature type="signal peptide" evidence="5">
    <location>
        <begin position="1"/>
        <end position="20"/>
    </location>
</feature>
<feature type="chain" id="PRO_0000008488" description="Syncytin-1">
    <location>
        <begin position="21"/>
        <end position="538"/>
    </location>
</feature>
<feature type="chain" id="PRO_0000008489" description="Surface protein" evidence="1">
    <location>
        <begin position="21"/>
        <end position="317"/>
    </location>
</feature>
<feature type="chain" id="PRO_0000008490" description="Transmembrane protein" evidence="1">
    <location>
        <begin position="318"/>
        <end position="538"/>
    </location>
</feature>
<feature type="topological domain" description="Extracellular" evidence="5">
    <location>
        <begin position="31"/>
        <end position="443"/>
    </location>
</feature>
<feature type="transmembrane region" description="Helical" evidence="5">
    <location>
        <begin position="444"/>
        <end position="464"/>
    </location>
</feature>
<feature type="topological domain" description="Cytoplasmic" evidence="5">
    <location>
        <begin position="465"/>
        <end position="538"/>
    </location>
</feature>
<feature type="region of interest" description="Fusion peptide" evidence="5">
    <location>
        <begin position="320"/>
        <end position="340"/>
    </location>
</feature>
<feature type="region of interest" description="Immunosuppression" evidence="1">
    <location>
        <begin position="380"/>
        <end position="396"/>
    </location>
</feature>
<feature type="region of interest" description="Essential for the fusiogenic function" evidence="1">
    <location>
        <begin position="465"/>
        <end position="484"/>
    </location>
</feature>
<feature type="region of interest" description="Disordered" evidence="6">
    <location>
        <begin position="494"/>
        <end position="538"/>
    </location>
</feature>
<feature type="short sequence motif" description="CXXC" evidence="7">
    <location>
        <begin position="186"/>
        <end position="189"/>
    </location>
</feature>
<feature type="short sequence motif" description="CX6CC" evidence="7">
    <location>
        <begin position="397"/>
        <end position="405"/>
    </location>
</feature>
<feature type="site" description="Cleavage" evidence="4">
    <location>
        <begin position="317"/>
        <end position="318"/>
    </location>
</feature>
<feature type="glycosylation site" description="N-linked (GlcNAc...) asparagine" evidence="5">
    <location>
        <position position="169"/>
    </location>
</feature>
<feature type="glycosylation site" description="N-linked (GlcNAc...) asparagine" evidence="5">
    <location>
        <position position="208"/>
    </location>
</feature>
<feature type="glycosylation site" description="N-linked (GlcNAc...) asparagine" evidence="5">
    <location>
        <position position="214"/>
    </location>
</feature>
<feature type="glycosylation site" description="N-linked (GlcNAc...) asparagine" evidence="5">
    <location>
        <position position="234"/>
    </location>
</feature>
<feature type="glycosylation site" description="N-linked (GlcNAc...) asparagine" evidence="5">
    <location>
        <position position="242"/>
    </location>
</feature>
<feature type="glycosylation site" description="N-linked (GlcNAc...) asparagine" evidence="5">
    <location>
        <position position="281"/>
    </location>
</feature>
<feature type="glycosylation site" description="N-linked (GlcNAc...) asparagine" evidence="5">
    <location>
        <position position="409"/>
    </location>
</feature>
<feature type="disulfide bond" description="Interchain (between SU and TM chains, or C-189 with C-405); in linked form" evidence="4">
    <location>
        <begin position="186"/>
        <end position="405"/>
    </location>
</feature>
<feature type="disulfide bond" evidence="2">
    <location>
        <begin position="186"/>
        <end position="189"/>
    </location>
</feature>
<feature type="disulfide bond" evidence="3">
    <location>
        <begin position="397"/>
        <end position="404"/>
    </location>
</feature>
<name>SYCY1_HYLPI</name>
<sequence>MALPYHIFLFTVLLPSFTLTAPPPCRCMTSSSPYQEFLWRTQRPGNIDAPLYRSFSKGSPTFTAHTYMPRTCYNSATLCMHANTQYWTGKMINPSCPGGLGVTVCWTYFTHTGMSDGGGVQDQAREKHVKEVISQLTQVHSTSSPYKGLDLSKLHETLRTHTRLVSLFNTTLTGLHEVSAQNPTNCWMCLPLDFRPYVSIPVPEQWNNFSTEINTTSVLVGPLVSNLEITHTSNLTCVKFSNTTDTTNSQCIRWVTPPTRIFCLPSGIFFVCGTSAYRCLNGSSESMCFLSFLVPPMTIYTEQDLYNYVVSKPRNKRVPILPFVMGAGVLGALGTGIGSITTSTQFYYKLSRELNGDMERVADSLVTLQDQLNSLAAVVLQNRRALDLLTAERGGTCLFLGEECCYYVNQSGIVTEKVKEIRDRIQRRAEELRNIGPWGLLSQWMPWILPFLGPLAAIILLLLFGPCIFNLLVNFVSSRIEAIKLQMEPKMESKTKNYRRSLDWPASPRSDVNDIKGIPPEEISTAQPLLRPNSAGSS</sequence>
<evidence type="ECO:0000250" key="1"/>
<evidence type="ECO:0000250" key="2">
    <source>
        <dbReference type="UniProtKB" id="P23064"/>
    </source>
</evidence>
<evidence type="ECO:0000250" key="3">
    <source>
        <dbReference type="UniProtKB" id="P60508"/>
    </source>
</evidence>
<evidence type="ECO:0000250" key="4">
    <source>
        <dbReference type="UniProtKB" id="Q9UQF0"/>
    </source>
</evidence>
<evidence type="ECO:0000255" key="5"/>
<evidence type="ECO:0000256" key="6">
    <source>
        <dbReference type="SAM" id="MobiDB-lite"/>
    </source>
</evidence>
<evidence type="ECO:0000305" key="7"/>
<keyword id="KW-1003">Cell membrane</keyword>
<keyword id="KW-0165">Cleavage on pair of basic residues</keyword>
<keyword id="KW-1015">Disulfide bond</keyword>
<keyword id="KW-0895">ERV</keyword>
<keyword id="KW-0325">Glycoprotein</keyword>
<keyword id="KW-0472">Membrane</keyword>
<keyword id="KW-0732">Signal</keyword>
<keyword id="KW-0812">Transmembrane</keyword>
<keyword id="KW-1133">Transmembrane helix</keyword>
<keyword id="KW-0814">Transposable element</keyword>
<keyword id="KW-0261">Viral envelope protein</keyword>
<keyword id="KW-0946">Virion</keyword>
<proteinExistence type="inferred from homology"/>
<dbReference type="EMBL" id="AY101592">
    <property type="protein sequence ID" value="AAM68171.1"/>
    <property type="molecule type" value="Genomic_DNA"/>
</dbReference>
<dbReference type="EMBL" id="AY101593">
    <property type="protein sequence ID" value="AAM68172.1"/>
    <property type="molecule type" value="Genomic_DNA"/>
</dbReference>
<dbReference type="SMR" id="P61562"/>
<dbReference type="GlyCosmos" id="P61562">
    <property type="glycosylation" value="7 sites, No reported glycans"/>
</dbReference>
<dbReference type="GO" id="GO:0005886">
    <property type="term" value="C:plasma membrane"/>
    <property type="evidence" value="ECO:0007669"/>
    <property type="project" value="UniProtKB-SubCell"/>
</dbReference>
<dbReference type="GO" id="GO:0006949">
    <property type="term" value="P:syncytium formation"/>
    <property type="evidence" value="ECO:0000250"/>
    <property type="project" value="UniProtKB"/>
</dbReference>
<dbReference type="GO" id="GO:0000768">
    <property type="term" value="P:syncytium formation by plasma membrane fusion"/>
    <property type="evidence" value="ECO:0007669"/>
    <property type="project" value="TreeGrafter"/>
</dbReference>
<dbReference type="CDD" id="cd09851">
    <property type="entry name" value="HTLV-1-like_HR1-HR2"/>
    <property type="match status" value="1"/>
</dbReference>
<dbReference type="FunFam" id="1.10.287.210:FF:000002">
    <property type="entry name" value="Syncytin-2"/>
    <property type="match status" value="1"/>
</dbReference>
<dbReference type="Gene3D" id="1.10.287.210">
    <property type="match status" value="1"/>
</dbReference>
<dbReference type="InterPro" id="IPR018154">
    <property type="entry name" value="TLV/ENV_coat_polyprotein"/>
</dbReference>
<dbReference type="PANTHER" id="PTHR10424:SF48">
    <property type="entry name" value="SYNCYTIN-1"/>
    <property type="match status" value="1"/>
</dbReference>
<dbReference type="PANTHER" id="PTHR10424">
    <property type="entry name" value="VIRAL ENVELOPE PROTEIN"/>
    <property type="match status" value="1"/>
</dbReference>
<dbReference type="Pfam" id="PF00429">
    <property type="entry name" value="TLV_coat"/>
    <property type="match status" value="1"/>
</dbReference>
<dbReference type="SUPFAM" id="SSF58069">
    <property type="entry name" value="Virus ectodomain"/>
    <property type="match status" value="1"/>
</dbReference>
<accession>P61562</accession>